<protein>
    <recommendedName>
        <fullName evidence="1">Protein-export protein SecB</fullName>
    </recommendedName>
</protein>
<organism>
    <name type="scientific">Salmonella typhimurium (strain LT2 / SGSC1412 / ATCC 700720)</name>
    <dbReference type="NCBI Taxonomy" id="99287"/>
    <lineage>
        <taxon>Bacteria</taxon>
        <taxon>Pseudomonadati</taxon>
        <taxon>Pseudomonadota</taxon>
        <taxon>Gammaproteobacteria</taxon>
        <taxon>Enterobacterales</taxon>
        <taxon>Enterobacteriaceae</taxon>
        <taxon>Salmonella</taxon>
    </lineage>
</organism>
<evidence type="ECO:0000255" key="1">
    <source>
        <dbReference type="HAMAP-Rule" id="MF_00821"/>
    </source>
</evidence>
<feature type="chain" id="PRO_0000055415" description="Protein-export protein SecB">
    <location>
        <begin position="1"/>
        <end position="155"/>
    </location>
</feature>
<proteinExistence type="inferred from homology"/>
<reference key="1">
    <citation type="journal article" date="2001" name="Nature">
        <title>Complete genome sequence of Salmonella enterica serovar Typhimurium LT2.</title>
        <authorList>
            <person name="McClelland M."/>
            <person name="Sanderson K.E."/>
            <person name="Spieth J."/>
            <person name="Clifton S.W."/>
            <person name="Latreille P."/>
            <person name="Courtney L."/>
            <person name="Porwollik S."/>
            <person name="Ali J."/>
            <person name="Dante M."/>
            <person name="Du F."/>
            <person name="Hou S."/>
            <person name="Layman D."/>
            <person name="Leonard S."/>
            <person name="Nguyen C."/>
            <person name="Scott K."/>
            <person name="Holmes A."/>
            <person name="Grewal N."/>
            <person name="Mulvaney E."/>
            <person name="Ryan E."/>
            <person name="Sun H."/>
            <person name="Florea L."/>
            <person name="Miller W."/>
            <person name="Stoneking T."/>
            <person name="Nhan M."/>
            <person name="Waterston R."/>
            <person name="Wilson R.K."/>
        </authorList>
    </citation>
    <scope>NUCLEOTIDE SEQUENCE [LARGE SCALE GENOMIC DNA]</scope>
    <source>
        <strain>LT2 / SGSC1412 / ATCC 700720</strain>
    </source>
</reference>
<comment type="function">
    <text evidence="1">One of the proteins required for the normal export of preproteins out of the cell cytoplasm. It is a molecular chaperone that binds to a subset of precursor proteins, maintaining them in a translocation-competent state. It also specifically binds to its receptor SecA.</text>
</comment>
<comment type="subcellular location">
    <subcellularLocation>
        <location evidence="1">Cytoplasm</location>
    </subcellularLocation>
</comment>
<comment type="similarity">
    <text evidence="1">Belongs to the SecB family.</text>
</comment>
<gene>
    <name evidence="1" type="primary">secB</name>
    <name type="ordered locus">STM3701</name>
</gene>
<sequence>MSEQNNTEMAFQIQRIYTKDVSFEAPNAPHVFQKDWQPEVKLDLDTASSQLADDVYEVVLRVTVTASLGEETAFLCEVQQAGIFSISGIEGTQMAHCLGAYCPNILFPYARECITSLVSRGTFPQLNLAPVNFDALFMNYLQQQAGEGTEEHQDA</sequence>
<accession>Q7CPH8</accession>
<name>SECB_SALTY</name>
<dbReference type="EMBL" id="AE006468">
    <property type="protein sequence ID" value="AAL22560.1"/>
    <property type="molecule type" value="Genomic_DNA"/>
</dbReference>
<dbReference type="RefSeq" id="NP_462601.1">
    <property type="nucleotide sequence ID" value="NC_003197.2"/>
</dbReference>
<dbReference type="RefSeq" id="WP_000003370.1">
    <property type="nucleotide sequence ID" value="NC_003197.2"/>
</dbReference>
<dbReference type="SMR" id="Q7CPH8"/>
<dbReference type="STRING" id="99287.STM3701"/>
<dbReference type="PaxDb" id="99287-STM3701"/>
<dbReference type="GeneID" id="1255225"/>
<dbReference type="KEGG" id="stm:STM3701"/>
<dbReference type="PATRIC" id="fig|99287.12.peg.3914"/>
<dbReference type="HOGENOM" id="CLU_111574_1_0_6"/>
<dbReference type="OMA" id="CPNVLFP"/>
<dbReference type="PhylomeDB" id="Q7CPH8"/>
<dbReference type="BioCyc" id="SENT99287:STM3701-MONOMER"/>
<dbReference type="Proteomes" id="UP000001014">
    <property type="component" value="Chromosome"/>
</dbReference>
<dbReference type="GO" id="GO:0005737">
    <property type="term" value="C:cytoplasm"/>
    <property type="evidence" value="ECO:0007669"/>
    <property type="project" value="UniProtKB-SubCell"/>
</dbReference>
<dbReference type="GO" id="GO:0051082">
    <property type="term" value="F:unfolded protein binding"/>
    <property type="evidence" value="ECO:0007669"/>
    <property type="project" value="InterPro"/>
</dbReference>
<dbReference type="GO" id="GO:0006457">
    <property type="term" value="P:protein folding"/>
    <property type="evidence" value="ECO:0007669"/>
    <property type="project" value="UniProtKB-UniRule"/>
</dbReference>
<dbReference type="GO" id="GO:0051262">
    <property type="term" value="P:protein tetramerization"/>
    <property type="evidence" value="ECO:0007669"/>
    <property type="project" value="InterPro"/>
</dbReference>
<dbReference type="GO" id="GO:0015031">
    <property type="term" value="P:protein transport"/>
    <property type="evidence" value="ECO:0007669"/>
    <property type="project" value="UniProtKB-UniRule"/>
</dbReference>
<dbReference type="CDD" id="cd00557">
    <property type="entry name" value="Translocase_SecB"/>
    <property type="match status" value="1"/>
</dbReference>
<dbReference type="FunFam" id="3.10.420.10:FF:000001">
    <property type="entry name" value="Protein-export chaperone SecB"/>
    <property type="match status" value="1"/>
</dbReference>
<dbReference type="Gene3D" id="3.10.420.10">
    <property type="entry name" value="SecB-like"/>
    <property type="match status" value="1"/>
</dbReference>
<dbReference type="HAMAP" id="MF_00821">
    <property type="entry name" value="SecB"/>
    <property type="match status" value="1"/>
</dbReference>
<dbReference type="InterPro" id="IPR003708">
    <property type="entry name" value="SecB"/>
</dbReference>
<dbReference type="InterPro" id="IPR035958">
    <property type="entry name" value="SecB-like_sf"/>
</dbReference>
<dbReference type="NCBIfam" id="NF004390">
    <property type="entry name" value="PRK05751.1-1"/>
    <property type="match status" value="1"/>
</dbReference>
<dbReference type="NCBIfam" id="NF004393">
    <property type="entry name" value="PRK05751.1-4"/>
    <property type="match status" value="1"/>
</dbReference>
<dbReference type="NCBIfam" id="TIGR00809">
    <property type="entry name" value="secB"/>
    <property type="match status" value="1"/>
</dbReference>
<dbReference type="PANTHER" id="PTHR36918">
    <property type="match status" value="1"/>
</dbReference>
<dbReference type="PANTHER" id="PTHR36918:SF1">
    <property type="entry name" value="PROTEIN-EXPORT PROTEIN SECB"/>
    <property type="match status" value="1"/>
</dbReference>
<dbReference type="Pfam" id="PF02556">
    <property type="entry name" value="SecB"/>
    <property type="match status" value="1"/>
</dbReference>
<dbReference type="PRINTS" id="PR01594">
    <property type="entry name" value="SECBCHAPRONE"/>
</dbReference>
<dbReference type="SUPFAM" id="SSF54611">
    <property type="entry name" value="SecB-like"/>
    <property type="match status" value="1"/>
</dbReference>
<keyword id="KW-0143">Chaperone</keyword>
<keyword id="KW-0963">Cytoplasm</keyword>
<keyword id="KW-0653">Protein transport</keyword>
<keyword id="KW-1185">Reference proteome</keyword>
<keyword id="KW-0811">Translocation</keyword>
<keyword id="KW-0813">Transport</keyword>